<accession>Q8BVM4</accession>
<accession>A2A823</accession>
<comment type="function">
    <text evidence="2 3 4 5 6 9">Antizyme inhibitor (AZI) protein that positively regulates ornithine decarboxylase (ODC) activity and polyamine uptake. AZI is an enzymatically inactive ODC homolog that counteracts the negative effect of ODC antizymes (AZs) OAZ1, OAZ2 and OAZ3 on ODC activity by competing with ODC for antizyme-binding (PubMed:18062773, PubMed:18508777, PubMed:18973822). Inhibits antizyme-dependent ODC degradation and releases ODC monomers from their inactive complex with antizymes, leading to formation of the catalytically active ODC homodimer and restoring polyamine production (PubMed:16916800, PubMed:24967154). Participates in the morphological integrity of the trans-Golgi network (TGN) and functions as a regulator of intracellular secretory vesicle trafficking (By similarity).</text>
</comment>
<comment type="subunit">
    <text evidence="3 4 6 9">Monomer. Interacts with OAZ1, OAZ2 and OAZ3; this interaction disrupts the interaction between the antizyme and ODC1. Does not form a heterodimer with ODC1.</text>
</comment>
<comment type="interaction">
    <interactant intactId="EBI-9656869">
        <id>Q8BVM4</id>
    </interactant>
    <interactant intactId="EBI-4370103">
        <id>Q9R109</id>
        <label>Oaz3</label>
    </interactant>
    <organismsDiffer>false</organismsDiffer>
    <experiments>2</experiments>
</comment>
<comment type="subcellular location">
    <subcellularLocation>
        <location>Nucleus</location>
    </subcellularLocation>
    <subcellularLocation>
        <location>Cytoplasm</location>
    </subcellularLocation>
    <subcellularLocation>
        <location evidence="1">Cytoplasm</location>
        <location evidence="1">Perinuclear region</location>
    </subcellularLocation>
    <subcellularLocation>
        <location>Membrane</location>
    </subcellularLocation>
    <subcellularLocation>
        <location evidence="1">Cytoplasmic vesicle</location>
    </subcellularLocation>
    <subcellularLocation>
        <location>Endoplasmic reticulum-Golgi intermediate compartment</location>
    </subcellularLocation>
    <subcellularLocation>
        <location>Golgi apparatus</location>
        <location>cis-Golgi network</location>
    </subcellularLocation>
    <subcellularLocation>
        <location evidence="1">Golgi apparatus</location>
        <location evidence="1">trans-Golgi network</location>
    </subcellularLocation>
    <subcellularLocation>
        <location>Cytoplasmic granule</location>
    </subcellularLocation>
    <subcellularLocation>
        <location evidence="1">Cell projection</location>
        <location evidence="1">Axon</location>
    </subcellularLocation>
    <subcellularLocation>
        <location evidence="1">Cell projection</location>
        <location evidence="1">Dendrite</location>
    </subcellularLocation>
    <subcellularLocation>
        <location evidence="1">Perikaryon</location>
    </subcellularLocation>
    <text evidence="1">Detected as vesicle-like pattern in neurite outgrowths. Localizes to the vesicular compartments of the secretory pathway, predominantly in the trans-Golgi network (TGN). Localizes with vesicle-associated membrane protein VAMP8 in the vicinity of the plasma membrane within serotonin-containing secretory granules (By similarity). Colocalizes with KDEL receptors in ER-Golgi intermediate compartment (ERGIC). Translocates from the ERGIC structure to the cytoplasm in a antizyme-dependent manner. Localizes with vesicle-associated membrane protein VAMP8 in the vicinity of the plasma membrane within serotonin-containing secretory granules.</text>
</comment>
<comment type="tissue specificity">
    <text evidence="3 5 6 7 8">Expressed in the medulla and chromaffin cells of the adrenal gland. Expressed in the Langerhans islets of the pancreas. Expressed in the inner part of the seminiferous tubules and in spermatozoa located in the lumen of the epididymis of the testis. Expressed in the cortex, hippocampus and cerebellum of the brain. Expressed in normal and neoplastic mast cells (MC) (at protein level). Expressed in testis, pancreas and brain. Expressed throughout the differentiation process from spermatids to spermatozoa in the inner part of the seminiferous tubules. Expressed in the kidney: expressed in the superficial (Cs) and the deep layer (Cd) of the cortex region and in the outer stripe (OS), inner stripe (IS) and the inner medulla papilla (IM) of the medulla region.</text>
</comment>
<comment type="domain">
    <text>The N-terminus domain is necessary for its localization to the ER-Golgi intermediate compartment (ERGIC).</text>
</comment>
<comment type="PTM">
    <text evidence="4">Ubiquitinated, leading to its proteasomal degradation; a process that is reduced in presence of antizymes. May also be degraded through the lysosomal degradative pathway in a proteasomal-independent manner.</text>
</comment>
<comment type="miscellaneous">
    <text evidence="10">Gly-70 is present instead of the conserved Lys which would otherwise be the covalent pyridoxal phosphate binding site.</text>
</comment>
<comment type="similarity">
    <text evidence="10">Belongs to the Orn/Lys/Arg decarboxylase class-II family. ODC antizyme inhibitor subfamily.</text>
</comment>
<comment type="caution">
    <text evidence="11">The human ortholog was initially reported to have ornithine or arginine decarboxylase activities, but it was later found to possess neither of them.</text>
</comment>
<comment type="caution">
    <text evidence="11 12">Previously reported to be localized in the mitochondrion (PubMed:16916800). However, it was not confirmed by later reports (PubMed:18062773).</text>
</comment>
<organism>
    <name type="scientific">Mus musculus</name>
    <name type="common">Mouse</name>
    <dbReference type="NCBI Taxonomy" id="10090"/>
    <lineage>
        <taxon>Eukaryota</taxon>
        <taxon>Metazoa</taxon>
        <taxon>Chordata</taxon>
        <taxon>Craniata</taxon>
        <taxon>Vertebrata</taxon>
        <taxon>Euteleostomi</taxon>
        <taxon>Mammalia</taxon>
        <taxon>Eutheria</taxon>
        <taxon>Euarchontoglires</taxon>
        <taxon>Glires</taxon>
        <taxon>Rodentia</taxon>
        <taxon>Myomorpha</taxon>
        <taxon>Muroidea</taxon>
        <taxon>Muridae</taxon>
        <taxon>Murinae</taxon>
        <taxon>Mus</taxon>
        <taxon>Mus</taxon>
    </lineage>
</organism>
<feature type="chain" id="PRO_0000149945" description="Antizyme inhibitor 2">
    <location>
        <begin position="1"/>
        <end position="459"/>
    </location>
</feature>
<feature type="region of interest" description="Necessary for polyamine uptake stimulation">
    <location>
        <begin position="117"/>
        <end position="140"/>
    </location>
</feature>
<feature type="mutagenesis site" description="Does not inhibit interaction with OAZ1. Reduces interaction with OAZ1; when associated with A-142." evidence="9">
    <original>K</original>
    <variation>A</variation>
    <location>
        <position position="116"/>
    </location>
</feature>
<feature type="mutagenesis site" description="Does not inhibit interaction with OAZ1." evidence="9">
    <original>A</original>
    <variation>S</variation>
    <location>
        <position position="124"/>
    </location>
</feature>
<feature type="mutagenesis site" description="Strongly reduces interaction with OAZ1 and unable to abrogate both the inhibitory effect of OAZ1 on ornithine decarboxylase (ODC) activity and polyamine uptake; when associated with A-140 and A-142." evidence="9">
    <original>E</original>
    <variation>A</variation>
    <location>
        <position position="139"/>
    </location>
</feature>
<feature type="mutagenesis site" description="Strongly reduces interaction with OAZ1 and unable to abrogate both the inhibitory effect of OAZ1 on ornithine decarboxylase (ODC) activity and polyamine uptake; when associated with A-139 and A-142." evidence="9">
    <original>L</original>
    <variation>A</variation>
    <location>
        <position position="140"/>
    </location>
</feature>
<feature type="mutagenesis site" description="Does not inhibit interaction with OAZ1. Reduces interaction with OAZ1; when associated with A-116. Strongly reduces interaction with OAZ1 and unable to abrogate the inhibitory effect of OAZ1 on ornithine decarboxylase (ODC) activity and polyamine uptake; when associated with A-139 and A-140." evidence="9">
    <original>K</original>
    <variation>A</variation>
    <location>
        <position position="142"/>
    </location>
</feature>
<feature type="sequence conflict" description="In Ref. 1; no nucleotide entry." evidence="10" ref="1">
    <original>Y</original>
    <variation>H</variation>
    <location>
        <position position="317"/>
    </location>
</feature>
<proteinExistence type="evidence at protein level"/>
<dbReference type="EMBL" id="AK077201">
    <property type="protein sequence ID" value="BAC36679.1"/>
    <property type="molecule type" value="mRNA"/>
</dbReference>
<dbReference type="EMBL" id="AL607086">
    <property type="status" value="NOT_ANNOTATED_CDS"/>
    <property type="molecule type" value="Genomic_DNA"/>
</dbReference>
<dbReference type="CCDS" id="CCDS18678.1"/>
<dbReference type="RefSeq" id="NP_766463.1">
    <property type="nucleotide sequence ID" value="NM_172875.4"/>
</dbReference>
<dbReference type="SMR" id="Q8BVM4"/>
<dbReference type="FunCoup" id="Q8BVM4">
    <property type="interactions" value="479"/>
</dbReference>
<dbReference type="IntAct" id="Q8BVM4">
    <property type="interactions" value="3"/>
</dbReference>
<dbReference type="STRING" id="10090.ENSMUSP00000030581"/>
<dbReference type="GlyGen" id="Q8BVM4">
    <property type="glycosylation" value="2 sites"/>
</dbReference>
<dbReference type="PhosphoSitePlus" id="Q8BVM4"/>
<dbReference type="PaxDb" id="10090-ENSMUSP00000030581"/>
<dbReference type="ProteomicsDB" id="273644"/>
<dbReference type="Pumba" id="Q8BVM4"/>
<dbReference type="Antibodypedia" id="31397">
    <property type="antibodies" value="77 antibodies from 21 providers"/>
</dbReference>
<dbReference type="DNASU" id="242669"/>
<dbReference type="Ensembl" id="ENSMUST00000030581.10">
    <property type="protein sequence ID" value="ENSMUSP00000030581.4"/>
    <property type="gene ID" value="ENSMUSG00000028789.17"/>
</dbReference>
<dbReference type="Ensembl" id="ENSMUST00000106068.8">
    <property type="protein sequence ID" value="ENSMUSP00000101683.2"/>
    <property type="gene ID" value="ENSMUSG00000028789.17"/>
</dbReference>
<dbReference type="GeneID" id="242669"/>
<dbReference type="KEGG" id="mmu:242669"/>
<dbReference type="UCSC" id="uc008uvq.2">
    <property type="organism name" value="mouse"/>
</dbReference>
<dbReference type="AGR" id="MGI:2442093"/>
<dbReference type="CTD" id="113451"/>
<dbReference type="MGI" id="MGI:2442093">
    <property type="gene designation" value="Azin2"/>
</dbReference>
<dbReference type="VEuPathDB" id="HostDB:ENSMUSG00000028789"/>
<dbReference type="eggNOG" id="KOG0622">
    <property type="taxonomic scope" value="Eukaryota"/>
</dbReference>
<dbReference type="GeneTree" id="ENSGT00950000182995"/>
<dbReference type="InParanoid" id="Q8BVM4"/>
<dbReference type="OMA" id="FTCYSVK"/>
<dbReference type="OrthoDB" id="5034579at2759"/>
<dbReference type="PhylomeDB" id="Q8BVM4"/>
<dbReference type="TreeFam" id="TF300760"/>
<dbReference type="Reactome" id="R-MMU-351143">
    <property type="pathway name" value="Agmatine biosynthesis"/>
</dbReference>
<dbReference type="BioGRID-ORCS" id="242669">
    <property type="hits" value="1 hit in 78 CRISPR screens"/>
</dbReference>
<dbReference type="PRO" id="PR:Q8BVM4"/>
<dbReference type="Proteomes" id="UP000000589">
    <property type="component" value="Chromosome 4"/>
</dbReference>
<dbReference type="RNAct" id="Q8BVM4">
    <property type="molecule type" value="protein"/>
</dbReference>
<dbReference type="Bgee" id="ENSMUSG00000028789">
    <property type="expression patterns" value="Expressed in seminiferous tubule of testis and 140 other cell types or tissues"/>
</dbReference>
<dbReference type="ExpressionAtlas" id="Q8BVM4">
    <property type="expression patterns" value="baseline and differential"/>
</dbReference>
<dbReference type="GO" id="GO:0030424">
    <property type="term" value="C:axon"/>
    <property type="evidence" value="ECO:0000250"/>
    <property type="project" value="UniProtKB"/>
</dbReference>
<dbReference type="GO" id="GO:0005801">
    <property type="term" value="C:cis-Golgi network"/>
    <property type="evidence" value="ECO:0000314"/>
    <property type="project" value="UniProtKB"/>
</dbReference>
<dbReference type="GO" id="GO:0031410">
    <property type="term" value="C:cytoplasmic vesicle"/>
    <property type="evidence" value="ECO:0000250"/>
    <property type="project" value="UniProtKB"/>
</dbReference>
<dbReference type="GO" id="GO:0005829">
    <property type="term" value="C:cytosol"/>
    <property type="evidence" value="ECO:0007669"/>
    <property type="project" value="Ensembl"/>
</dbReference>
<dbReference type="GO" id="GO:0030425">
    <property type="term" value="C:dendrite"/>
    <property type="evidence" value="ECO:0000250"/>
    <property type="project" value="UniProtKB"/>
</dbReference>
<dbReference type="GO" id="GO:0033116">
    <property type="term" value="C:endoplasmic reticulum-Golgi intermediate compartment membrane"/>
    <property type="evidence" value="ECO:0000314"/>
    <property type="project" value="UniProtKB"/>
</dbReference>
<dbReference type="GO" id="GO:1990005">
    <property type="term" value="C:granular vesicle"/>
    <property type="evidence" value="ECO:0000250"/>
    <property type="project" value="UniProtKB"/>
</dbReference>
<dbReference type="GO" id="GO:0005739">
    <property type="term" value="C:mitochondrion"/>
    <property type="evidence" value="ECO:0000314"/>
    <property type="project" value="MGI"/>
</dbReference>
<dbReference type="GO" id="GO:0005634">
    <property type="term" value="C:nucleus"/>
    <property type="evidence" value="ECO:0000250"/>
    <property type="project" value="UniProtKB"/>
</dbReference>
<dbReference type="GO" id="GO:0043204">
    <property type="term" value="C:perikaryon"/>
    <property type="evidence" value="ECO:0000250"/>
    <property type="project" value="UniProtKB"/>
</dbReference>
<dbReference type="GO" id="GO:0048471">
    <property type="term" value="C:perinuclear region of cytoplasm"/>
    <property type="evidence" value="ECO:0000250"/>
    <property type="project" value="UniProtKB"/>
</dbReference>
<dbReference type="GO" id="GO:0005802">
    <property type="term" value="C:trans-Golgi network"/>
    <property type="evidence" value="ECO:0000250"/>
    <property type="project" value="UniProtKB"/>
</dbReference>
<dbReference type="GO" id="GO:0030133">
    <property type="term" value="C:transport vesicle"/>
    <property type="evidence" value="ECO:0000250"/>
    <property type="project" value="UniProtKB"/>
</dbReference>
<dbReference type="GO" id="GO:0003824">
    <property type="term" value="F:catalytic activity"/>
    <property type="evidence" value="ECO:0007669"/>
    <property type="project" value="InterPro"/>
</dbReference>
<dbReference type="GO" id="GO:0042978">
    <property type="term" value="F:ornithine decarboxylase activator activity"/>
    <property type="evidence" value="ECO:0000314"/>
    <property type="project" value="UniProtKB"/>
</dbReference>
<dbReference type="GO" id="GO:0042177">
    <property type="term" value="P:negative regulation of protein catabolic process"/>
    <property type="evidence" value="ECO:0007669"/>
    <property type="project" value="Ensembl"/>
</dbReference>
<dbReference type="GO" id="GO:0006591">
    <property type="term" value="P:ornithine metabolic process"/>
    <property type="evidence" value="ECO:0000314"/>
    <property type="project" value="MGI"/>
</dbReference>
<dbReference type="GO" id="GO:0006596">
    <property type="term" value="P:polyamine biosynthetic process"/>
    <property type="evidence" value="ECO:0007669"/>
    <property type="project" value="UniProtKB-KW"/>
</dbReference>
<dbReference type="GO" id="GO:0043085">
    <property type="term" value="P:positive regulation of catalytic activity"/>
    <property type="evidence" value="ECO:0000314"/>
    <property type="project" value="UniProtKB"/>
</dbReference>
<dbReference type="GO" id="GO:1902269">
    <property type="term" value="P:positive regulation of polyamine transmembrane transport"/>
    <property type="evidence" value="ECO:0000314"/>
    <property type="project" value="UniProtKB"/>
</dbReference>
<dbReference type="GO" id="GO:0098629">
    <property type="term" value="P:trans-Golgi network membrane organization"/>
    <property type="evidence" value="ECO:0000250"/>
    <property type="project" value="UniProtKB"/>
</dbReference>
<dbReference type="CDD" id="cd00622">
    <property type="entry name" value="PLPDE_III_ODC"/>
    <property type="match status" value="1"/>
</dbReference>
<dbReference type="FunFam" id="2.40.37.10:FF:000009">
    <property type="entry name" value="antizyme inhibitor 2 isoform X1"/>
    <property type="match status" value="1"/>
</dbReference>
<dbReference type="FunFam" id="3.20.20.10:FF:000006">
    <property type="entry name" value="Ornithine decarboxylase 1"/>
    <property type="match status" value="1"/>
</dbReference>
<dbReference type="Gene3D" id="3.20.20.10">
    <property type="entry name" value="Alanine racemase"/>
    <property type="match status" value="1"/>
</dbReference>
<dbReference type="Gene3D" id="2.40.37.10">
    <property type="entry name" value="Lyase, Ornithine Decarboxylase, Chain A, domain 1"/>
    <property type="match status" value="1"/>
</dbReference>
<dbReference type="InterPro" id="IPR009006">
    <property type="entry name" value="Ala_racemase/Decarboxylase_C"/>
</dbReference>
<dbReference type="InterPro" id="IPR022643">
    <property type="entry name" value="De-COase2_C"/>
</dbReference>
<dbReference type="InterPro" id="IPR022657">
    <property type="entry name" value="De-COase2_CS"/>
</dbReference>
<dbReference type="InterPro" id="IPR022644">
    <property type="entry name" value="De-COase2_N"/>
</dbReference>
<dbReference type="InterPro" id="IPR000183">
    <property type="entry name" value="Orn/DAP/Arg_de-COase"/>
</dbReference>
<dbReference type="InterPro" id="IPR002433">
    <property type="entry name" value="Orn_de-COase"/>
</dbReference>
<dbReference type="InterPro" id="IPR029066">
    <property type="entry name" value="PLP-binding_barrel"/>
</dbReference>
<dbReference type="PANTHER" id="PTHR11482:SF4">
    <property type="entry name" value="ANTIZYME INHIBITOR 2"/>
    <property type="match status" value="1"/>
</dbReference>
<dbReference type="PANTHER" id="PTHR11482">
    <property type="entry name" value="ARGININE/DIAMINOPIMELATE/ORNITHINE DECARBOXYLASE"/>
    <property type="match status" value="1"/>
</dbReference>
<dbReference type="Pfam" id="PF02784">
    <property type="entry name" value="Orn_Arg_deC_N"/>
    <property type="match status" value="1"/>
</dbReference>
<dbReference type="Pfam" id="PF00278">
    <property type="entry name" value="Orn_DAP_Arg_deC"/>
    <property type="match status" value="1"/>
</dbReference>
<dbReference type="PRINTS" id="PR01179">
    <property type="entry name" value="ODADCRBXLASE"/>
</dbReference>
<dbReference type="PRINTS" id="PR01182">
    <property type="entry name" value="ORNDCRBXLASE"/>
</dbReference>
<dbReference type="SUPFAM" id="SSF50621">
    <property type="entry name" value="Alanine racemase C-terminal domain-like"/>
    <property type="match status" value="1"/>
</dbReference>
<dbReference type="SUPFAM" id="SSF51419">
    <property type="entry name" value="PLP-binding barrel"/>
    <property type="match status" value="1"/>
</dbReference>
<dbReference type="PROSITE" id="PS00879">
    <property type="entry name" value="ODR_DC_2_2"/>
    <property type="match status" value="1"/>
</dbReference>
<evidence type="ECO:0000250" key="1"/>
<evidence type="ECO:0000250" key="2">
    <source>
        <dbReference type="UniProtKB" id="Q96A70"/>
    </source>
</evidence>
<evidence type="ECO:0000269" key="3">
    <source>
    </source>
</evidence>
<evidence type="ECO:0000269" key="4">
    <source>
    </source>
</evidence>
<evidence type="ECO:0000269" key="5">
    <source>
    </source>
</evidence>
<evidence type="ECO:0000269" key="6">
    <source>
    </source>
</evidence>
<evidence type="ECO:0000269" key="7">
    <source>
    </source>
</evidence>
<evidence type="ECO:0000269" key="8">
    <source>
    </source>
</evidence>
<evidence type="ECO:0000269" key="9">
    <source>
    </source>
</evidence>
<evidence type="ECO:0000305" key="10"/>
<evidence type="ECO:0000305" key="11">
    <source>
    </source>
</evidence>
<evidence type="ECO:0000305" key="12">
    <source>
    </source>
</evidence>
<gene>
    <name type="primary">Azin2</name>
    <name type="synonym">Adc</name>
    <name type="synonym">Odcp</name>
</gene>
<keyword id="KW-0966">Cell projection</keyword>
<keyword id="KW-0963">Cytoplasm</keyword>
<keyword id="KW-0968">Cytoplasmic vesicle</keyword>
<keyword id="KW-0333">Golgi apparatus</keyword>
<keyword id="KW-0472">Membrane</keyword>
<keyword id="KW-0539">Nucleus</keyword>
<keyword id="KW-0620">Polyamine biosynthesis</keyword>
<keyword id="KW-1185">Reference proteome</keyword>
<keyword id="KW-0813">Transport</keyword>
<keyword id="KW-0832">Ubl conjugation</keyword>
<reference key="1">
    <citation type="journal article" date="2006" name="J. Biol. Chem.">
        <title>Mouse ornithine decarboxylase-like gene encodes an antizyme inhibitor devoid of ornithine and arginine decarboxylating activity.</title>
        <authorList>
            <person name="Lopez-Contreras A.J."/>
            <person name="Lopez-Garcia C."/>
            <person name="Jimenez-Cervantes C."/>
            <person name="Cremades A."/>
            <person name="Penafiel R."/>
        </authorList>
    </citation>
    <scope>NUCLEOTIDE SEQUENCE [MRNA]</scope>
    <scope>FUNCTION</scope>
    <scope>INTERACTION WITH OAZ1; OAZ2 AND OAZ3</scope>
    <scope>SUBCELLULAR LOCATION</scope>
    <scope>TISSUE SPECIFICITY</scope>
</reference>
<reference key="2">
    <citation type="journal article" date="2005" name="Science">
        <title>The transcriptional landscape of the mammalian genome.</title>
        <authorList>
            <person name="Carninci P."/>
            <person name="Kasukawa T."/>
            <person name="Katayama S."/>
            <person name="Gough J."/>
            <person name="Frith M.C."/>
            <person name="Maeda N."/>
            <person name="Oyama R."/>
            <person name="Ravasi T."/>
            <person name="Lenhard B."/>
            <person name="Wells C."/>
            <person name="Kodzius R."/>
            <person name="Shimokawa K."/>
            <person name="Bajic V.B."/>
            <person name="Brenner S.E."/>
            <person name="Batalov S."/>
            <person name="Forrest A.R."/>
            <person name="Zavolan M."/>
            <person name="Davis M.J."/>
            <person name="Wilming L.G."/>
            <person name="Aidinis V."/>
            <person name="Allen J.E."/>
            <person name="Ambesi-Impiombato A."/>
            <person name="Apweiler R."/>
            <person name="Aturaliya R.N."/>
            <person name="Bailey T.L."/>
            <person name="Bansal M."/>
            <person name="Baxter L."/>
            <person name="Beisel K.W."/>
            <person name="Bersano T."/>
            <person name="Bono H."/>
            <person name="Chalk A.M."/>
            <person name="Chiu K.P."/>
            <person name="Choudhary V."/>
            <person name="Christoffels A."/>
            <person name="Clutterbuck D.R."/>
            <person name="Crowe M.L."/>
            <person name="Dalla E."/>
            <person name="Dalrymple B.P."/>
            <person name="de Bono B."/>
            <person name="Della Gatta G."/>
            <person name="di Bernardo D."/>
            <person name="Down T."/>
            <person name="Engstrom P."/>
            <person name="Fagiolini M."/>
            <person name="Faulkner G."/>
            <person name="Fletcher C.F."/>
            <person name="Fukushima T."/>
            <person name="Furuno M."/>
            <person name="Futaki S."/>
            <person name="Gariboldi M."/>
            <person name="Georgii-Hemming P."/>
            <person name="Gingeras T.R."/>
            <person name="Gojobori T."/>
            <person name="Green R.E."/>
            <person name="Gustincich S."/>
            <person name="Harbers M."/>
            <person name="Hayashi Y."/>
            <person name="Hensch T.K."/>
            <person name="Hirokawa N."/>
            <person name="Hill D."/>
            <person name="Huminiecki L."/>
            <person name="Iacono M."/>
            <person name="Ikeo K."/>
            <person name="Iwama A."/>
            <person name="Ishikawa T."/>
            <person name="Jakt M."/>
            <person name="Kanapin A."/>
            <person name="Katoh M."/>
            <person name="Kawasawa Y."/>
            <person name="Kelso J."/>
            <person name="Kitamura H."/>
            <person name="Kitano H."/>
            <person name="Kollias G."/>
            <person name="Krishnan S.P."/>
            <person name="Kruger A."/>
            <person name="Kummerfeld S.K."/>
            <person name="Kurochkin I.V."/>
            <person name="Lareau L.F."/>
            <person name="Lazarevic D."/>
            <person name="Lipovich L."/>
            <person name="Liu J."/>
            <person name="Liuni S."/>
            <person name="McWilliam S."/>
            <person name="Madan Babu M."/>
            <person name="Madera M."/>
            <person name="Marchionni L."/>
            <person name="Matsuda H."/>
            <person name="Matsuzawa S."/>
            <person name="Miki H."/>
            <person name="Mignone F."/>
            <person name="Miyake S."/>
            <person name="Morris K."/>
            <person name="Mottagui-Tabar S."/>
            <person name="Mulder N."/>
            <person name="Nakano N."/>
            <person name="Nakauchi H."/>
            <person name="Ng P."/>
            <person name="Nilsson R."/>
            <person name="Nishiguchi S."/>
            <person name="Nishikawa S."/>
            <person name="Nori F."/>
            <person name="Ohara O."/>
            <person name="Okazaki Y."/>
            <person name="Orlando V."/>
            <person name="Pang K.C."/>
            <person name="Pavan W.J."/>
            <person name="Pavesi G."/>
            <person name="Pesole G."/>
            <person name="Petrovsky N."/>
            <person name="Piazza S."/>
            <person name="Reed J."/>
            <person name="Reid J.F."/>
            <person name="Ring B.Z."/>
            <person name="Ringwald M."/>
            <person name="Rost B."/>
            <person name="Ruan Y."/>
            <person name="Salzberg S.L."/>
            <person name="Sandelin A."/>
            <person name="Schneider C."/>
            <person name="Schoenbach C."/>
            <person name="Sekiguchi K."/>
            <person name="Semple C.A."/>
            <person name="Seno S."/>
            <person name="Sessa L."/>
            <person name="Sheng Y."/>
            <person name="Shibata Y."/>
            <person name="Shimada H."/>
            <person name="Shimada K."/>
            <person name="Silva D."/>
            <person name="Sinclair B."/>
            <person name="Sperling S."/>
            <person name="Stupka E."/>
            <person name="Sugiura K."/>
            <person name="Sultana R."/>
            <person name="Takenaka Y."/>
            <person name="Taki K."/>
            <person name="Tammoja K."/>
            <person name="Tan S.L."/>
            <person name="Tang S."/>
            <person name="Taylor M.S."/>
            <person name="Tegner J."/>
            <person name="Teichmann S.A."/>
            <person name="Ueda H.R."/>
            <person name="van Nimwegen E."/>
            <person name="Verardo R."/>
            <person name="Wei C.L."/>
            <person name="Yagi K."/>
            <person name="Yamanishi H."/>
            <person name="Zabarovsky E."/>
            <person name="Zhu S."/>
            <person name="Zimmer A."/>
            <person name="Hide W."/>
            <person name="Bult C."/>
            <person name="Grimmond S.M."/>
            <person name="Teasdale R.D."/>
            <person name="Liu E.T."/>
            <person name="Brusic V."/>
            <person name="Quackenbush J."/>
            <person name="Wahlestedt C."/>
            <person name="Mattick J.S."/>
            <person name="Hume D.A."/>
            <person name="Kai C."/>
            <person name="Sasaki D."/>
            <person name="Tomaru Y."/>
            <person name="Fukuda S."/>
            <person name="Kanamori-Katayama M."/>
            <person name="Suzuki M."/>
            <person name="Aoki J."/>
            <person name="Arakawa T."/>
            <person name="Iida J."/>
            <person name="Imamura K."/>
            <person name="Itoh M."/>
            <person name="Kato T."/>
            <person name="Kawaji H."/>
            <person name="Kawagashira N."/>
            <person name="Kawashima T."/>
            <person name="Kojima M."/>
            <person name="Kondo S."/>
            <person name="Konno H."/>
            <person name="Nakano K."/>
            <person name="Ninomiya N."/>
            <person name="Nishio T."/>
            <person name="Okada M."/>
            <person name="Plessy C."/>
            <person name="Shibata K."/>
            <person name="Shiraki T."/>
            <person name="Suzuki S."/>
            <person name="Tagami M."/>
            <person name="Waki K."/>
            <person name="Watahiki A."/>
            <person name="Okamura-Oho Y."/>
            <person name="Suzuki H."/>
            <person name="Kawai J."/>
            <person name="Hayashizaki Y."/>
        </authorList>
    </citation>
    <scope>NUCLEOTIDE SEQUENCE [LARGE SCALE MRNA]</scope>
    <source>
        <strain>C57BL/6J</strain>
        <tissue>Testis</tissue>
    </source>
</reference>
<reference key="3">
    <citation type="journal article" date="2009" name="PLoS Biol.">
        <title>Lineage-specific biology revealed by a finished genome assembly of the mouse.</title>
        <authorList>
            <person name="Church D.M."/>
            <person name="Goodstadt L."/>
            <person name="Hillier L.W."/>
            <person name="Zody M.C."/>
            <person name="Goldstein S."/>
            <person name="She X."/>
            <person name="Bult C.J."/>
            <person name="Agarwala R."/>
            <person name="Cherry J.L."/>
            <person name="DiCuccio M."/>
            <person name="Hlavina W."/>
            <person name="Kapustin Y."/>
            <person name="Meric P."/>
            <person name="Maglott D."/>
            <person name="Birtle Z."/>
            <person name="Marques A.C."/>
            <person name="Graves T."/>
            <person name="Zhou S."/>
            <person name="Teague B."/>
            <person name="Potamousis K."/>
            <person name="Churas C."/>
            <person name="Place M."/>
            <person name="Herschleb J."/>
            <person name="Runnheim R."/>
            <person name="Forrest D."/>
            <person name="Amos-Landgraf J."/>
            <person name="Schwartz D.C."/>
            <person name="Cheng Z."/>
            <person name="Lindblad-Toh K."/>
            <person name="Eichler E.E."/>
            <person name="Ponting C.P."/>
        </authorList>
    </citation>
    <scope>NUCLEOTIDE SEQUENCE [LARGE SCALE GENOMIC DNA]</scope>
    <source>
        <strain>C57BL/6J</strain>
    </source>
</reference>
<reference key="4">
    <citation type="journal article" date="2008" name="Biochem. J.">
        <title>ODCp, a brain- and testis-specific ornithine decarboxylase paralogue, functions as an antizyme inhibitor, although less efficiently than AzI1.</title>
        <authorList>
            <person name="Snapir Z."/>
            <person name="Keren-Paz A."/>
            <person name="Bercovich Z."/>
            <person name="Kahana C."/>
        </authorList>
    </citation>
    <scope>FUNCTION</scope>
    <scope>UBIQUITINATION</scope>
    <scope>INTERACTION WITH OAZ1 AND OAZ3</scope>
</reference>
<reference key="5">
    <citation type="journal article" date="2008" name="J. Biol. Chem.">
        <title>Antizyme inhibitor 2 (AZIN2/ODCp) stimulates polyamine uptake in mammalian cells.</title>
        <authorList>
            <person name="Lopez-Contreras A.J."/>
            <person name="Ramos-Molina B."/>
            <person name="Cremades A."/>
            <person name="Penafiel R."/>
        </authorList>
    </citation>
    <scope>FUNCTION</scope>
    <scope>TISSUE SPECIFICITY</scope>
</reference>
<reference key="6">
    <citation type="journal article" date="2009" name="Int. J. Biochem. Cell Biol.">
        <title>Expression of antizyme inhibitor 2 in male haploid germinal cells suggests a role in spermiogenesis.</title>
        <authorList>
            <person name="Lopez-Contreras A.J."/>
            <person name="Ramos-Molina B."/>
            <person name="Martinez-de-la-Torre M."/>
            <person name="Penafiel-Verdu C."/>
            <person name="Puelles L."/>
            <person name="Cremades A."/>
            <person name="Penafiel R."/>
        </authorList>
    </citation>
    <scope>FUNCTION</scope>
    <scope>INTERACTION WITH OAZ3</scope>
    <scope>SUBCELLULAR LOCATION</scope>
    <scope>TISSUE SPECIFICITY</scope>
</reference>
<reference key="7">
    <citation type="journal article" date="2009" name="J. Cell. Biochem.">
        <title>Subcellular localization of antizyme inhibitor 2 in mammalian cells: Influence of intrinsic sequences and interaction with antizymes.</title>
        <authorList>
            <person name="Lopez-Contreras A.J."/>
            <person name="Sanchez-Laorden B.L."/>
            <person name="Ramos-Molina B."/>
            <person name="de la Morena M.E."/>
            <person name="Cremades A."/>
            <person name="Penafiel R."/>
        </authorList>
    </citation>
    <scope>SUBCELLULAR LOCATION</scope>
</reference>
<reference key="8">
    <citation type="journal article" date="2012" name="Amino Acids">
        <title>Expression and distribution of genes encoding for polyamine-metabolizing enzymes in the different zones of male and female mouse kidneys.</title>
        <authorList>
            <person name="Levillain O."/>
            <person name="Ramos-Molina B."/>
            <person name="Forcheron F."/>
            <person name="Penafiel R."/>
        </authorList>
    </citation>
    <scope>TISSUE SPECIFICITY</scope>
</reference>
<reference key="9">
    <citation type="journal article" date="2010" name="Amino Acids">
        <title>Antizyme inhibitor 2: molecular, cellular and physiological aspects.</title>
        <authorList>
            <person name="Lopez-Contreras A.J."/>
            <person name="Ramos-Molina B."/>
            <person name="Cremades A."/>
            <person name="Penafiel R."/>
        </authorList>
    </citation>
    <scope>REVIEW</scope>
    <scope>CHARACTERIZATION</scope>
</reference>
<reference key="10">
    <citation type="journal article" date="2013" name="PLoS ONE">
        <title>Antizyme inhibitor 2 hypomorphic mice. New patterns of expression in pancreas and adrenal glands suggest a role in secretory processes.</title>
        <authorList>
            <person name="Lopez-Garcia C."/>
            <person name="Ramos-Molina B."/>
            <person name="Lambertos A."/>
            <person name="Lopez-Contreras A.J."/>
            <person name="Cremades A."/>
            <person name="Penafiel R."/>
        </authorList>
    </citation>
    <scope>SUBCELLULAR LOCATION</scope>
    <scope>TISSUE SPECIFICITY</scope>
</reference>
<reference key="11">
    <citation type="journal article" date="2014" name="FEBS Open Bio">
        <title>Structural and degradative aspects of ornithine decarboxylase antizyme inhibitor 2.</title>
        <authorList>
            <person name="Ramos-Molina B."/>
            <person name="Lambertos A."/>
            <person name="Lopez-Contreras A.J."/>
            <person name="Kasprzak J.M."/>
            <person name="Czerwoniec A."/>
            <person name="Bujnicki J.M."/>
            <person name="Cremades A."/>
            <person name="Penafiel R."/>
        </authorList>
    </citation>
    <scope>FUNCTION</scope>
    <scope>INTERACTION WITH OAZ1</scope>
    <scope>SUBUNIT</scope>
    <scope>MUTAGENESIS OF LYS-116; ALA-124; GLU-139; LEU-140 AND LYS-142</scope>
</reference>
<protein>
    <recommendedName>
        <fullName>Antizyme inhibitor 2</fullName>
        <shortName>AzI2</shortName>
    </recommendedName>
    <alternativeName>
        <fullName>Arginine decarboxylase-like protein</fullName>
        <shortName>ADC</shortName>
        <shortName>ARGDC</shortName>
    </alternativeName>
    <alternativeName>
        <fullName>Ornithine decarboxylase-like protein</fullName>
        <shortName>ODC-like protein</shortName>
    </alternativeName>
    <alternativeName>
        <fullName>ornithine decarboxylase paralog</fullName>
        <shortName>ODC-p</shortName>
    </alternativeName>
</protein>
<sequence length="459" mass="49503">MAGYLSESDFVMVEEGFSTRDLLEELTLGASQATSGKVAAFFVADLGAVVRKHFCFLKHLPRVRPFYAVGCNSSLGVLKVLAELGLGFSCANKAEMELVQHIGVPASKIICANPCKQVAQIKYAAKHGVRLLSFDNEVELAKVVKSHPSAKMVLCIATQDSHSLNHLSLRFGASLKSCRHLLENAKKSHVEVVGVSFHIGSGCPDPQAYAQSIADARLVFQMGEELGHTMNILDLGGGFPGLEGAKVRFEEMASVINSALDLYFPEGCGVDILAELGRYYVTSAFTVAVSIVAKREVLDQASREEQTGAAPKSIVYYLDEGVYGVFNSVLFDNTCPTPALQKKPSADQPLYSSSLWGPAVEGCDCVAEGLWLPQLQVGDWLVFDNMGAYTVDTKSLLGGTQARRVTYAMSRLAWEALRGQLLPAEEDQDAEGVCKPLSCGWEITDTLCVGPVFTPASIM</sequence>
<name>AZIN2_MOUSE</name>